<organism>
    <name type="scientific">Acinetobacter baylyi (strain ATCC 33305 / BD413 / ADP1)</name>
    <dbReference type="NCBI Taxonomy" id="62977"/>
    <lineage>
        <taxon>Bacteria</taxon>
        <taxon>Pseudomonadati</taxon>
        <taxon>Pseudomonadota</taxon>
        <taxon>Gammaproteobacteria</taxon>
        <taxon>Moraxellales</taxon>
        <taxon>Moraxellaceae</taxon>
        <taxon>Acinetobacter</taxon>
    </lineage>
</organism>
<gene>
    <name evidence="1" type="primary">astD</name>
    <name type="ordered locus">ACIAD1287</name>
</gene>
<proteinExistence type="inferred from homology"/>
<name>ASTD_ACIAD</name>
<reference key="1">
    <citation type="journal article" date="2004" name="Nucleic Acids Res.">
        <title>Unique features revealed by the genome sequence of Acinetobacter sp. ADP1, a versatile and naturally transformation competent bacterium.</title>
        <authorList>
            <person name="Barbe V."/>
            <person name="Vallenet D."/>
            <person name="Fonknechten N."/>
            <person name="Kreimeyer A."/>
            <person name="Oztas S."/>
            <person name="Labarre L."/>
            <person name="Cruveiller S."/>
            <person name="Robert C."/>
            <person name="Duprat S."/>
            <person name="Wincker P."/>
            <person name="Ornston L.N."/>
            <person name="Weissenbach J."/>
            <person name="Marliere P."/>
            <person name="Cohen G.N."/>
            <person name="Medigue C."/>
        </authorList>
    </citation>
    <scope>NUCLEOTIDE SEQUENCE [LARGE SCALE GENOMIC DNA]</scope>
    <source>
        <strain>ATCC 33305 / BD413 / ADP1</strain>
    </source>
</reference>
<protein>
    <recommendedName>
        <fullName evidence="1">N-succinylglutamate 5-semialdehyde dehydrogenase</fullName>
        <ecNumber evidence="1">1.2.1.71</ecNumber>
    </recommendedName>
    <alternativeName>
        <fullName evidence="1">Succinylglutamic semialdehyde dehydrogenase</fullName>
        <shortName evidence="1">SGSD</shortName>
    </alternativeName>
</protein>
<accession>Q6FCQ0</accession>
<evidence type="ECO:0000255" key="1">
    <source>
        <dbReference type="HAMAP-Rule" id="MF_01174"/>
    </source>
</evidence>
<feature type="chain" id="PRO_0000262386" description="N-succinylglutamate 5-semialdehyde dehydrogenase">
    <location>
        <begin position="1"/>
        <end position="489"/>
    </location>
</feature>
<feature type="active site" evidence="1">
    <location>
        <position position="246"/>
    </location>
</feature>
<feature type="active site" evidence="1">
    <location>
        <position position="280"/>
    </location>
</feature>
<feature type="binding site" evidence="1">
    <location>
        <begin position="223"/>
        <end position="228"/>
    </location>
    <ligand>
        <name>NAD(+)</name>
        <dbReference type="ChEBI" id="CHEBI:57540"/>
    </ligand>
</feature>
<comment type="function">
    <text evidence="1">Catalyzes the NAD-dependent reduction of succinylglutamate semialdehyde into succinylglutamate.</text>
</comment>
<comment type="catalytic activity">
    <reaction evidence="1">
        <text>N-succinyl-L-glutamate 5-semialdehyde + NAD(+) + H2O = N-succinyl-L-glutamate + NADH + 2 H(+)</text>
        <dbReference type="Rhea" id="RHEA:10812"/>
        <dbReference type="ChEBI" id="CHEBI:15377"/>
        <dbReference type="ChEBI" id="CHEBI:15378"/>
        <dbReference type="ChEBI" id="CHEBI:57540"/>
        <dbReference type="ChEBI" id="CHEBI:57945"/>
        <dbReference type="ChEBI" id="CHEBI:58520"/>
        <dbReference type="ChEBI" id="CHEBI:58763"/>
        <dbReference type="EC" id="1.2.1.71"/>
    </reaction>
</comment>
<comment type="pathway">
    <text evidence="1">Amino-acid degradation; L-arginine degradation via AST pathway; L-glutamate and succinate from L-arginine: step 4/5.</text>
</comment>
<comment type="similarity">
    <text evidence="1">Belongs to the aldehyde dehydrogenase family. AstD subfamily.</text>
</comment>
<dbReference type="EC" id="1.2.1.71" evidence="1"/>
<dbReference type="EMBL" id="CR543861">
    <property type="protein sequence ID" value="CAG68159.1"/>
    <property type="molecule type" value="Genomic_DNA"/>
</dbReference>
<dbReference type="RefSeq" id="WP_011182251.1">
    <property type="nucleotide sequence ID" value="NC_005966.1"/>
</dbReference>
<dbReference type="SMR" id="Q6FCQ0"/>
<dbReference type="STRING" id="202950.GCA_001485005_01047"/>
<dbReference type="GeneID" id="45233705"/>
<dbReference type="KEGG" id="aci:ACIAD1287"/>
<dbReference type="eggNOG" id="COG1012">
    <property type="taxonomic scope" value="Bacteria"/>
</dbReference>
<dbReference type="HOGENOM" id="CLU_005391_1_0_6"/>
<dbReference type="OrthoDB" id="9812625at2"/>
<dbReference type="BioCyc" id="ASP62977:ACIAD_RS05915-MONOMER"/>
<dbReference type="UniPathway" id="UPA00185">
    <property type="reaction ID" value="UER00282"/>
</dbReference>
<dbReference type="Proteomes" id="UP000000430">
    <property type="component" value="Chromosome"/>
</dbReference>
<dbReference type="GO" id="GO:0043824">
    <property type="term" value="F:succinylglutamate-semialdehyde dehydrogenase activity"/>
    <property type="evidence" value="ECO:0007669"/>
    <property type="project" value="UniProtKB-EC"/>
</dbReference>
<dbReference type="GO" id="GO:0019544">
    <property type="term" value="P:arginine catabolic process to glutamate"/>
    <property type="evidence" value="ECO:0007669"/>
    <property type="project" value="UniProtKB-UniRule"/>
</dbReference>
<dbReference type="GO" id="GO:0019545">
    <property type="term" value="P:arginine catabolic process to succinate"/>
    <property type="evidence" value="ECO:0007669"/>
    <property type="project" value="UniProtKB-UniRule"/>
</dbReference>
<dbReference type="CDD" id="cd07095">
    <property type="entry name" value="ALDH_SGSD_AstD"/>
    <property type="match status" value="1"/>
</dbReference>
<dbReference type="FunFam" id="3.40.309.10:FF:000013">
    <property type="entry name" value="N-succinylglutamate 5-semialdehyde dehydrogenase"/>
    <property type="match status" value="1"/>
</dbReference>
<dbReference type="FunFam" id="3.40.605.10:FF:000010">
    <property type="entry name" value="N-succinylglutamate 5-semialdehyde dehydrogenase"/>
    <property type="match status" value="1"/>
</dbReference>
<dbReference type="Gene3D" id="3.40.605.10">
    <property type="entry name" value="Aldehyde Dehydrogenase, Chain A, domain 1"/>
    <property type="match status" value="1"/>
</dbReference>
<dbReference type="Gene3D" id="3.40.309.10">
    <property type="entry name" value="Aldehyde Dehydrogenase, Chain A, domain 2"/>
    <property type="match status" value="1"/>
</dbReference>
<dbReference type="HAMAP" id="MF_01174">
    <property type="entry name" value="Aldedh_AstD"/>
    <property type="match status" value="1"/>
</dbReference>
<dbReference type="InterPro" id="IPR016161">
    <property type="entry name" value="Ald_DH/histidinol_DH"/>
</dbReference>
<dbReference type="InterPro" id="IPR016163">
    <property type="entry name" value="Ald_DH_C"/>
</dbReference>
<dbReference type="InterPro" id="IPR016160">
    <property type="entry name" value="Ald_DH_CS_CYS"/>
</dbReference>
<dbReference type="InterPro" id="IPR029510">
    <property type="entry name" value="Ald_DH_CS_GLU"/>
</dbReference>
<dbReference type="InterPro" id="IPR016162">
    <property type="entry name" value="Ald_DH_N"/>
</dbReference>
<dbReference type="InterPro" id="IPR015590">
    <property type="entry name" value="Aldehyde_DH_dom"/>
</dbReference>
<dbReference type="InterPro" id="IPR017649">
    <property type="entry name" value="SuccinylGlu_semiald_DH_AstD"/>
</dbReference>
<dbReference type="NCBIfam" id="TIGR03240">
    <property type="entry name" value="arg_catab_astD"/>
    <property type="match status" value="1"/>
</dbReference>
<dbReference type="NCBIfam" id="NF006992">
    <property type="entry name" value="PRK09457.1"/>
    <property type="match status" value="1"/>
</dbReference>
<dbReference type="PANTHER" id="PTHR11699">
    <property type="entry name" value="ALDEHYDE DEHYDROGENASE-RELATED"/>
    <property type="match status" value="1"/>
</dbReference>
<dbReference type="Pfam" id="PF00171">
    <property type="entry name" value="Aldedh"/>
    <property type="match status" value="1"/>
</dbReference>
<dbReference type="SUPFAM" id="SSF53720">
    <property type="entry name" value="ALDH-like"/>
    <property type="match status" value="1"/>
</dbReference>
<dbReference type="PROSITE" id="PS00070">
    <property type="entry name" value="ALDEHYDE_DEHYDR_CYS"/>
    <property type="match status" value="1"/>
</dbReference>
<dbReference type="PROSITE" id="PS00687">
    <property type="entry name" value="ALDEHYDE_DEHYDR_GLU"/>
    <property type="match status" value="1"/>
</dbReference>
<keyword id="KW-0056">Arginine metabolism</keyword>
<keyword id="KW-0520">NAD</keyword>
<keyword id="KW-0560">Oxidoreductase</keyword>
<sequence>MSHANLWIDGNWVQGQGKSWNTCNPVSQQVVWQGNEATAQQVEQACEAARQAFPQWATTSLTDRIAIIERFALLLEQNKEALAKIISQETSKPLWETLTEVQSMVAKVAISIRAYHQRTGKSITEMADGAASLRHRPHGVMAVFGPYNFPGHLPNGHIVPALIAGNVVVFKPSELTPWTAEATVKLWQQAGLPNAVLNLLQGSRETGIALAQSEHIDGVLFTGSASTGYQLHRQLAGAPEKILALEMGGNNALIIEDIDDIDAVVHLAIQSAFISAGQRCTCARRLIIKNGQAGDAFIQRFIEVARDLVIGDWDAEPQPFMGGVISVKAAEALLKAQQNLIDLGARSLLEMKQLRENSALVSPAILDVTAVPDIPDEEYFGPLTCIYRYDDFDEALKLANSTRFGLSVGLVSPKRALFERMLIEARAGIVNWNKPLTGASSAAPFGGVGASGNHRASAFYAADYCAWPMASLESEQLSLPEKLSPGIVL</sequence>